<name>NADD_CERSK</name>
<keyword id="KW-0067">ATP-binding</keyword>
<keyword id="KW-0520">NAD</keyword>
<keyword id="KW-0547">Nucleotide-binding</keyword>
<keyword id="KW-0548">Nucleotidyltransferase</keyword>
<keyword id="KW-0662">Pyridine nucleotide biosynthesis</keyword>
<keyword id="KW-0808">Transferase</keyword>
<dbReference type="EC" id="2.7.7.18" evidence="1"/>
<dbReference type="EMBL" id="CP001150">
    <property type="protein sequence ID" value="ACM01787.1"/>
    <property type="molecule type" value="Genomic_DNA"/>
</dbReference>
<dbReference type="SMR" id="B9KKZ0"/>
<dbReference type="KEGG" id="rsk:RSKD131_1927"/>
<dbReference type="HOGENOM" id="CLU_069765_2_0_5"/>
<dbReference type="UniPathway" id="UPA00253">
    <property type="reaction ID" value="UER00332"/>
</dbReference>
<dbReference type="GO" id="GO:0005524">
    <property type="term" value="F:ATP binding"/>
    <property type="evidence" value="ECO:0007669"/>
    <property type="project" value="UniProtKB-KW"/>
</dbReference>
<dbReference type="GO" id="GO:0004515">
    <property type="term" value="F:nicotinate-nucleotide adenylyltransferase activity"/>
    <property type="evidence" value="ECO:0007669"/>
    <property type="project" value="UniProtKB-UniRule"/>
</dbReference>
<dbReference type="GO" id="GO:0009435">
    <property type="term" value="P:NAD biosynthetic process"/>
    <property type="evidence" value="ECO:0007669"/>
    <property type="project" value="UniProtKB-UniRule"/>
</dbReference>
<dbReference type="CDD" id="cd02165">
    <property type="entry name" value="NMNAT"/>
    <property type="match status" value="1"/>
</dbReference>
<dbReference type="Gene3D" id="3.40.50.620">
    <property type="entry name" value="HUPs"/>
    <property type="match status" value="1"/>
</dbReference>
<dbReference type="HAMAP" id="MF_00244">
    <property type="entry name" value="NaMN_adenylyltr"/>
    <property type="match status" value="1"/>
</dbReference>
<dbReference type="InterPro" id="IPR004821">
    <property type="entry name" value="Cyt_trans-like"/>
</dbReference>
<dbReference type="InterPro" id="IPR005248">
    <property type="entry name" value="NadD/NMNAT"/>
</dbReference>
<dbReference type="InterPro" id="IPR014729">
    <property type="entry name" value="Rossmann-like_a/b/a_fold"/>
</dbReference>
<dbReference type="NCBIfam" id="TIGR00125">
    <property type="entry name" value="cyt_tran_rel"/>
    <property type="match status" value="1"/>
</dbReference>
<dbReference type="NCBIfam" id="TIGR00482">
    <property type="entry name" value="nicotinate (nicotinamide) nucleotide adenylyltransferase"/>
    <property type="match status" value="1"/>
</dbReference>
<dbReference type="NCBIfam" id="NF000843">
    <property type="entry name" value="PRK00071.2-2"/>
    <property type="match status" value="1"/>
</dbReference>
<dbReference type="NCBIfam" id="NF000845">
    <property type="entry name" value="PRK00071.2-4"/>
    <property type="match status" value="1"/>
</dbReference>
<dbReference type="PANTHER" id="PTHR39321">
    <property type="entry name" value="NICOTINATE-NUCLEOTIDE ADENYLYLTRANSFERASE-RELATED"/>
    <property type="match status" value="1"/>
</dbReference>
<dbReference type="PANTHER" id="PTHR39321:SF3">
    <property type="entry name" value="PHOSPHOPANTETHEINE ADENYLYLTRANSFERASE"/>
    <property type="match status" value="1"/>
</dbReference>
<dbReference type="Pfam" id="PF01467">
    <property type="entry name" value="CTP_transf_like"/>
    <property type="match status" value="1"/>
</dbReference>
<dbReference type="SUPFAM" id="SSF52374">
    <property type="entry name" value="Nucleotidylyl transferase"/>
    <property type="match status" value="1"/>
</dbReference>
<organism>
    <name type="scientific">Cereibacter sphaeroides (strain KD131 / KCTC 12085)</name>
    <name type="common">Rhodobacter sphaeroides</name>
    <dbReference type="NCBI Taxonomy" id="557760"/>
    <lineage>
        <taxon>Bacteria</taxon>
        <taxon>Pseudomonadati</taxon>
        <taxon>Pseudomonadota</taxon>
        <taxon>Alphaproteobacteria</taxon>
        <taxon>Rhodobacterales</taxon>
        <taxon>Paracoccaceae</taxon>
        <taxon>Cereibacter</taxon>
    </lineage>
</organism>
<feature type="chain" id="PRO_1000125359" description="Probable nicotinate-nucleotide adenylyltransferase">
    <location>
        <begin position="1"/>
        <end position="192"/>
    </location>
</feature>
<proteinExistence type="inferred from homology"/>
<protein>
    <recommendedName>
        <fullName evidence="1">Probable nicotinate-nucleotide adenylyltransferase</fullName>
        <ecNumber evidence="1">2.7.7.18</ecNumber>
    </recommendedName>
    <alternativeName>
        <fullName evidence="1">Deamido-NAD(+) diphosphorylase</fullName>
    </alternativeName>
    <alternativeName>
        <fullName evidence="1">Deamido-NAD(+) pyrophosphorylase</fullName>
    </alternativeName>
    <alternativeName>
        <fullName evidence="1">Nicotinate mononucleotide adenylyltransferase</fullName>
        <shortName evidence="1">NaMN adenylyltransferase</shortName>
    </alternativeName>
</protein>
<reference key="1">
    <citation type="journal article" date="2009" name="J. Bacteriol.">
        <title>Complete genome sequence of Rhodobacter sphaeroides KD131.</title>
        <authorList>
            <person name="Lim S.-K."/>
            <person name="Kim S.J."/>
            <person name="Cha S.H."/>
            <person name="Oh Y.-K."/>
            <person name="Rhee H.-J."/>
            <person name="Kim M.-S."/>
            <person name="Lee J.K."/>
        </authorList>
    </citation>
    <scope>NUCLEOTIDE SEQUENCE [LARGE SCALE GENOMIC DNA]</scope>
    <source>
        <strain>KD131 / KCTC 12085</strain>
    </source>
</reference>
<sequence length="192" mass="21379">MVVGLLGGSFDPPHPGHVHITREALKRFGLDRVWWLVSPGNPLKPRPPAPLARRLAEARRLMRHPRVAVTGLEAEIGTRFTAETLAVLQRRYPGVRFVWLMGADNLAQFHRWERWRAIMESVPVGVLARPGAGLRARTSPAARRYASALLPEAEAARLGRSAAPAWCFVNLPMMDLSSTEIRATGRWRGQAD</sequence>
<comment type="function">
    <text evidence="1">Catalyzes the reversible adenylation of nicotinate mononucleotide (NaMN) to nicotinic acid adenine dinucleotide (NaAD).</text>
</comment>
<comment type="catalytic activity">
    <reaction evidence="1">
        <text>nicotinate beta-D-ribonucleotide + ATP + H(+) = deamido-NAD(+) + diphosphate</text>
        <dbReference type="Rhea" id="RHEA:22860"/>
        <dbReference type="ChEBI" id="CHEBI:15378"/>
        <dbReference type="ChEBI" id="CHEBI:30616"/>
        <dbReference type="ChEBI" id="CHEBI:33019"/>
        <dbReference type="ChEBI" id="CHEBI:57502"/>
        <dbReference type="ChEBI" id="CHEBI:58437"/>
        <dbReference type="EC" id="2.7.7.18"/>
    </reaction>
</comment>
<comment type="pathway">
    <text evidence="1">Cofactor biosynthesis; NAD(+) biosynthesis; deamido-NAD(+) from nicotinate D-ribonucleotide: step 1/1.</text>
</comment>
<comment type="similarity">
    <text evidence="1">Belongs to the NadD family.</text>
</comment>
<gene>
    <name evidence="1" type="primary">nadD</name>
    <name type="ordered locus">RSKD131_1927</name>
</gene>
<accession>B9KKZ0</accession>
<evidence type="ECO:0000255" key="1">
    <source>
        <dbReference type="HAMAP-Rule" id="MF_00244"/>
    </source>
</evidence>